<dbReference type="EC" id="4.2.1.33"/>
<dbReference type="EMBL" id="AJ006877">
    <property type="protein sequence ID" value="CAA07298.1"/>
    <property type="molecule type" value="Genomic_DNA"/>
</dbReference>
<dbReference type="SMR" id="Q9ZEZ5"/>
<dbReference type="UniPathway" id="UPA00048">
    <property type="reaction ID" value="UER00071"/>
</dbReference>
<dbReference type="GO" id="GO:0009316">
    <property type="term" value="C:3-isopropylmalate dehydratase complex"/>
    <property type="evidence" value="ECO:0007669"/>
    <property type="project" value="InterPro"/>
</dbReference>
<dbReference type="GO" id="GO:0003861">
    <property type="term" value="F:3-isopropylmalate dehydratase activity"/>
    <property type="evidence" value="ECO:0007669"/>
    <property type="project" value="UniProtKB-UniRule"/>
</dbReference>
<dbReference type="GO" id="GO:0009098">
    <property type="term" value="P:L-leucine biosynthetic process"/>
    <property type="evidence" value="ECO:0007669"/>
    <property type="project" value="UniProtKB-UniRule"/>
</dbReference>
<dbReference type="CDD" id="cd01577">
    <property type="entry name" value="IPMI_Swivel"/>
    <property type="match status" value="1"/>
</dbReference>
<dbReference type="FunFam" id="3.20.19.10:FF:000003">
    <property type="entry name" value="3-isopropylmalate dehydratase small subunit"/>
    <property type="match status" value="1"/>
</dbReference>
<dbReference type="Gene3D" id="3.20.19.10">
    <property type="entry name" value="Aconitase, domain 4"/>
    <property type="match status" value="1"/>
</dbReference>
<dbReference type="HAMAP" id="MF_01031">
    <property type="entry name" value="LeuD_type1"/>
    <property type="match status" value="1"/>
</dbReference>
<dbReference type="InterPro" id="IPR004431">
    <property type="entry name" value="3-IsopropMal_deHydase_ssu"/>
</dbReference>
<dbReference type="InterPro" id="IPR015928">
    <property type="entry name" value="Aconitase/3IPM_dehydase_swvl"/>
</dbReference>
<dbReference type="InterPro" id="IPR000573">
    <property type="entry name" value="AconitaseA/IPMdHydase_ssu_swvl"/>
</dbReference>
<dbReference type="InterPro" id="IPR033940">
    <property type="entry name" value="IPMI_Swivel"/>
</dbReference>
<dbReference type="InterPro" id="IPR050075">
    <property type="entry name" value="LeuD"/>
</dbReference>
<dbReference type="NCBIfam" id="TIGR00171">
    <property type="entry name" value="leuD"/>
    <property type="match status" value="1"/>
</dbReference>
<dbReference type="NCBIfam" id="NF002458">
    <property type="entry name" value="PRK01641.1"/>
    <property type="match status" value="1"/>
</dbReference>
<dbReference type="PANTHER" id="PTHR43345:SF5">
    <property type="entry name" value="3-ISOPROPYLMALATE DEHYDRATASE SMALL SUBUNIT"/>
    <property type="match status" value="1"/>
</dbReference>
<dbReference type="PANTHER" id="PTHR43345">
    <property type="entry name" value="3-ISOPROPYLMALATE DEHYDRATASE SMALL SUBUNIT 2-RELATED-RELATED"/>
    <property type="match status" value="1"/>
</dbReference>
<dbReference type="Pfam" id="PF00694">
    <property type="entry name" value="Aconitase_C"/>
    <property type="match status" value="1"/>
</dbReference>
<dbReference type="SUPFAM" id="SSF52016">
    <property type="entry name" value="LeuD/IlvD-like"/>
    <property type="match status" value="1"/>
</dbReference>
<organism>
    <name type="scientific">Buchnera aphidicola subsp. Pterocomma populeum</name>
    <dbReference type="NCBI Taxonomy" id="98792"/>
    <lineage>
        <taxon>Bacteria</taxon>
        <taxon>Pseudomonadati</taxon>
        <taxon>Pseudomonadota</taxon>
        <taxon>Gammaproteobacteria</taxon>
        <taxon>Enterobacterales</taxon>
        <taxon>Erwiniaceae</taxon>
        <taxon>Buchnera</taxon>
    </lineage>
</organism>
<feature type="chain" id="PRO_0000141801" description="3-isopropylmalate dehydratase small subunit">
    <location>
        <begin position="1"/>
        <end position="207"/>
    </location>
</feature>
<sequence>MFKFTQHNGIVMPLDIANIDTDIIIPKQFLQKVNKLGFGKYLFHNWRFIDENQSQINPNFILNIEKYKKSSILLTRDNFGCGSSREHAVWALLDYGFKVIIAPSFSDIFYNNSFNNKLLLITLPNNQIDKFFNIINQNPGIYFNIDLLKNEIKVEKKIYSFQIDKFRRFCLLNGLDDIDLTLKNIEKIDSYEKKICNFLIKRKKFVS</sequence>
<protein>
    <recommendedName>
        <fullName>3-isopropylmalate dehydratase small subunit</fullName>
        <ecNumber>4.2.1.33</ecNumber>
    </recommendedName>
    <alternativeName>
        <fullName>Alpha-IPM isomerase</fullName>
        <shortName>IPMI</shortName>
    </alternativeName>
    <alternativeName>
        <fullName>Isopropylmalate isomerase</fullName>
    </alternativeName>
</protein>
<name>LEUD_BUCPP</name>
<comment type="function">
    <text evidence="1">Catalyzes the isomerization between 2-isopropylmalate and 3-isopropylmalate, via the formation of 2-isopropylmaleate.</text>
</comment>
<comment type="catalytic activity">
    <reaction>
        <text>(2R,3S)-3-isopropylmalate = (2S)-2-isopropylmalate</text>
        <dbReference type="Rhea" id="RHEA:32287"/>
        <dbReference type="ChEBI" id="CHEBI:1178"/>
        <dbReference type="ChEBI" id="CHEBI:35121"/>
        <dbReference type="EC" id="4.2.1.33"/>
    </reaction>
</comment>
<comment type="pathway">
    <text>Amino-acid biosynthesis; L-leucine biosynthesis; L-leucine from 3-methyl-2-oxobutanoate: step 2/4.</text>
</comment>
<comment type="subunit">
    <text>Heterodimer of LeuC and LeuD.</text>
</comment>
<comment type="similarity">
    <text evidence="2">Belongs to the LeuD family. LeuD type 1 subfamily.</text>
</comment>
<proteinExistence type="inferred from homology"/>
<reference key="1">
    <citation type="journal article" date="1998" name="FEMS Microbiol. Lett.">
        <title>Structure and evolution of the leucine plasmids carried by the endosymbiont (Buchnera aphidicola) from aphids of the family Aphididae.</title>
        <authorList>
            <person name="Silva F.J."/>
            <person name="van Ham R.C.H.J."/>
            <person name="Sabater B."/>
            <person name="Latorre A."/>
        </authorList>
    </citation>
    <scope>NUCLEOTIDE SEQUENCE [GENOMIC DNA]</scope>
</reference>
<gene>
    <name type="primary">leuD</name>
</gene>
<evidence type="ECO:0000250" key="1"/>
<evidence type="ECO:0000305" key="2"/>
<geneLocation type="plasmid">
    <name>pBPp1</name>
</geneLocation>
<keyword id="KW-0028">Amino-acid biosynthesis</keyword>
<keyword id="KW-0100">Branched-chain amino acid biosynthesis</keyword>
<keyword id="KW-0432">Leucine biosynthesis</keyword>
<keyword id="KW-0456">Lyase</keyword>
<keyword id="KW-0614">Plasmid</keyword>
<accession>Q9ZEZ5</accession>